<accession>Q9A8U8</accession>
<protein>
    <recommendedName>
        <fullName evidence="1">Large ribosomal subunit protein uL22</fullName>
    </recommendedName>
    <alternativeName>
        <fullName evidence="2">50S ribosomal protein L22</fullName>
    </alternativeName>
</protein>
<reference key="1">
    <citation type="journal article" date="2001" name="Proc. Natl. Acad. Sci. U.S.A.">
        <title>Complete genome sequence of Caulobacter crescentus.</title>
        <authorList>
            <person name="Nierman W.C."/>
            <person name="Feldblyum T.V."/>
            <person name="Laub M.T."/>
            <person name="Paulsen I.T."/>
            <person name="Nelson K.E."/>
            <person name="Eisen J.A."/>
            <person name="Heidelberg J.F."/>
            <person name="Alley M.R.K."/>
            <person name="Ohta N."/>
            <person name="Maddock J.R."/>
            <person name="Potocka I."/>
            <person name="Nelson W.C."/>
            <person name="Newton A."/>
            <person name="Stephens C."/>
            <person name="Phadke N.D."/>
            <person name="Ely B."/>
            <person name="DeBoy R.T."/>
            <person name="Dodson R.J."/>
            <person name="Durkin A.S."/>
            <person name="Gwinn M.L."/>
            <person name="Haft D.H."/>
            <person name="Kolonay J.F."/>
            <person name="Smit J."/>
            <person name="Craven M.B."/>
            <person name="Khouri H.M."/>
            <person name="Shetty J."/>
            <person name="Berry K.J."/>
            <person name="Utterback T.R."/>
            <person name="Tran K."/>
            <person name="Wolf A.M."/>
            <person name="Vamathevan J.J."/>
            <person name="Ermolaeva M.D."/>
            <person name="White O."/>
            <person name="Salzberg S.L."/>
            <person name="Venter J.C."/>
            <person name="Shapiro L."/>
            <person name="Fraser C.M."/>
        </authorList>
    </citation>
    <scope>NUCLEOTIDE SEQUENCE [LARGE SCALE GENOMIC DNA]</scope>
    <source>
        <strain>ATCC 19089 / CIP 103742 / CB 15</strain>
    </source>
</reference>
<comment type="function">
    <text evidence="1">This protein binds specifically to 23S rRNA; its binding is stimulated by other ribosomal proteins, e.g. L4, L17, and L20. It is important during the early stages of 50S assembly. It makes multiple contacts with different domains of the 23S rRNA in the assembled 50S subunit and ribosome (By similarity).</text>
</comment>
<comment type="function">
    <text evidence="1">The globular domain of the protein is located near the polypeptide exit tunnel on the outside of the subunit, while an extended beta-hairpin is found that lines the wall of the exit tunnel in the center of the 70S ribosome.</text>
</comment>
<comment type="subunit">
    <text evidence="1">Part of the 50S ribosomal subunit.</text>
</comment>
<comment type="similarity">
    <text evidence="1">Belongs to the universal ribosomal protein uL22 family.</text>
</comment>
<dbReference type="EMBL" id="AE005673">
    <property type="protein sequence ID" value="AAK23234.1"/>
    <property type="molecule type" value="Genomic_DNA"/>
</dbReference>
<dbReference type="PIR" id="F87404">
    <property type="entry name" value="F87404"/>
</dbReference>
<dbReference type="RefSeq" id="NP_420066.1">
    <property type="nucleotide sequence ID" value="NC_002696.2"/>
</dbReference>
<dbReference type="RefSeq" id="WP_010919132.1">
    <property type="nucleotide sequence ID" value="NC_002696.2"/>
</dbReference>
<dbReference type="SMR" id="Q9A8U8"/>
<dbReference type="STRING" id="190650.CC_1253"/>
<dbReference type="EnsemblBacteria" id="AAK23234">
    <property type="protein sequence ID" value="AAK23234"/>
    <property type="gene ID" value="CC_1253"/>
</dbReference>
<dbReference type="KEGG" id="ccr:CC_1253"/>
<dbReference type="PATRIC" id="fig|190650.5.peg.1278"/>
<dbReference type="eggNOG" id="COG0091">
    <property type="taxonomic scope" value="Bacteria"/>
</dbReference>
<dbReference type="HOGENOM" id="CLU_083987_3_0_5"/>
<dbReference type="BioCyc" id="CAULO:CC1253-MONOMER"/>
<dbReference type="Proteomes" id="UP000001816">
    <property type="component" value="Chromosome"/>
</dbReference>
<dbReference type="GO" id="GO:0022625">
    <property type="term" value="C:cytosolic large ribosomal subunit"/>
    <property type="evidence" value="ECO:0007669"/>
    <property type="project" value="TreeGrafter"/>
</dbReference>
<dbReference type="GO" id="GO:0019843">
    <property type="term" value="F:rRNA binding"/>
    <property type="evidence" value="ECO:0007669"/>
    <property type="project" value="UniProtKB-UniRule"/>
</dbReference>
<dbReference type="GO" id="GO:0003735">
    <property type="term" value="F:structural constituent of ribosome"/>
    <property type="evidence" value="ECO:0007669"/>
    <property type="project" value="InterPro"/>
</dbReference>
<dbReference type="GO" id="GO:0006412">
    <property type="term" value="P:translation"/>
    <property type="evidence" value="ECO:0007669"/>
    <property type="project" value="UniProtKB-UniRule"/>
</dbReference>
<dbReference type="CDD" id="cd00336">
    <property type="entry name" value="Ribosomal_L22"/>
    <property type="match status" value="1"/>
</dbReference>
<dbReference type="Gene3D" id="3.90.470.10">
    <property type="entry name" value="Ribosomal protein L22/L17"/>
    <property type="match status" value="1"/>
</dbReference>
<dbReference type="HAMAP" id="MF_01331_B">
    <property type="entry name" value="Ribosomal_uL22_B"/>
    <property type="match status" value="1"/>
</dbReference>
<dbReference type="InterPro" id="IPR001063">
    <property type="entry name" value="Ribosomal_uL22"/>
</dbReference>
<dbReference type="InterPro" id="IPR005727">
    <property type="entry name" value="Ribosomal_uL22_bac/chlpt-type"/>
</dbReference>
<dbReference type="InterPro" id="IPR047867">
    <property type="entry name" value="Ribosomal_uL22_bac/org-type"/>
</dbReference>
<dbReference type="InterPro" id="IPR036394">
    <property type="entry name" value="Ribosomal_uL22_sf"/>
</dbReference>
<dbReference type="NCBIfam" id="TIGR01044">
    <property type="entry name" value="rplV_bact"/>
    <property type="match status" value="1"/>
</dbReference>
<dbReference type="PANTHER" id="PTHR13501">
    <property type="entry name" value="CHLOROPLAST 50S RIBOSOMAL PROTEIN L22-RELATED"/>
    <property type="match status" value="1"/>
</dbReference>
<dbReference type="PANTHER" id="PTHR13501:SF8">
    <property type="entry name" value="LARGE RIBOSOMAL SUBUNIT PROTEIN UL22M"/>
    <property type="match status" value="1"/>
</dbReference>
<dbReference type="Pfam" id="PF00237">
    <property type="entry name" value="Ribosomal_L22"/>
    <property type="match status" value="1"/>
</dbReference>
<dbReference type="SUPFAM" id="SSF54843">
    <property type="entry name" value="Ribosomal protein L22"/>
    <property type="match status" value="1"/>
</dbReference>
<gene>
    <name evidence="1" type="primary">rplV</name>
    <name type="ordered locus">CC_1253</name>
</gene>
<organism>
    <name type="scientific">Caulobacter vibrioides (strain ATCC 19089 / CIP 103742 / CB 15)</name>
    <name type="common">Caulobacter crescentus</name>
    <dbReference type="NCBI Taxonomy" id="190650"/>
    <lineage>
        <taxon>Bacteria</taxon>
        <taxon>Pseudomonadati</taxon>
        <taxon>Pseudomonadota</taxon>
        <taxon>Alphaproteobacteria</taxon>
        <taxon>Caulobacterales</taxon>
        <taxon>Caulobacteraceae</taxon>
        <taxon>Caulobacter</taxon>
    </lineage>
</organism>
<name>RL22_CAUVC</name>
<feature type="chain" id="PRO_0000125135" description="Large ribosomal subunit protein uL22">
    <location>
        <begin position="1"/>
        <end position="126"/>
    </location>
</feature>
<sequence>MAKQKQERRLPAAEAMCKVRTLRTSPRKLNLVAQSIRGLNVQRALNELEFSHKRIAQDVRKALYSAISNAENNHNLDIDSLVVAEAYVGKNLIMKRFSPRARGRATRVEKPFSEITIVVRELGEAA</sequence>
<evidence type="ECO:0000255" key="1">
    <source>
        <dbReference type="HAMAP-Rule" id="MF_01331"/>
    </source>
</evidence>
<evidence type="ECO:0000305" key="2"/>
<keyword id="KW-1185">Reference proteome</keyword>
<keyword id="KW-0687">Ribonucleoprotein</keyword>
<keyword id="KW-0689">Ribosomal protein</keyword>
<keyword id="KW-0694">RNA-binding</keyword>
<keyword id="KW-0699">rRNA-binding</keyword>
<proteinExistence type="inferred from homology"/>